<gene>
    <name type="primary">ascD</name>
    <name type="synonym">ddhD</name>
    <name type="synonym">rfbI</name>
    <name type="ordered locus">YPTB0998</name>
</gene>
<feature type="initiator methionine" description="Removed">
    <location>
        <position position="1"/>
    </location>
</feature>
<feature type="chain" id="PRO_0000189394" description="CDP-6-deoxy-L-threo-D-glycero-4-hexulose-3-dehydrase reductase">
    <location>
        <begin position="2"/>
        <end position="329"/>
    </location>
</feature>
<feature type="domain" description="2Fe-2S ferredoxin-type" evidence="1">
    <location>
        <begin position="2"/>
        <end position="93"/>
    </location>
</feature>
<feature type="domain" description="FAD-binding FR-type" evidence="2">
    <location>
        <begin position="98"/>
        <end position="197"/>
    </location>
</feature>
<feature type="binding site" evidence="1">
    <location>
        <position position="37"/>
    </location>
    <ligand>
        <name>[2Fe-2S] cluster</name>
        <dbReference type="ChEBI" id="CHEBI:190135"/>
    </ligand>
</feature>
<feature type="binding site" evidence="1">
    <location>
        <position position="42"/>
    </location>
    <ligand>
        <name>[2Fe-2S] cluster</name>
        <dbReference type="ChEBI" id="CHEBI:190135"/>
    </ligand>
</feature>
<feature type="binding site" evidence="1">
    <location>
        <position position="45"/>
    </location>
    <ligand>
        <name>[2Fe-2S] cluster</name>
        <dbReference type="ChEBI" id="CHEBI:190135"/>
    </ligand>
</feature>
<feature type="binding site" evidence="1">
    <location>
        <position position="75"/>
    </location>
    <ligand>
        <name>[2Fe-2S] cluster</name>
        <dbReference type="ChEBI" id="CHEBI:190135"/>
    </ligand>
</feature>
<feature type="sequence conflict" description="In Ref. 1, 2 and 3." evidence="3" ref="1 2 3">
    <original>V</original>
    <variation>I</variation>
    <location>
        <position position="111"/>
    </location>
</feature>
<organism>
    <name type="scientific">Yersinia pseudotuberculosis serotype I (strain IP32953)</name>
    <dbReference type="NCBI Taxonomy" id="273123"/>
    <lineage>
        <taxon>Bacteria</taxon>
        <taxon>Pseudomonadati</taxon>
        <taxon>Pseudomonadota</taxon>
        <taxon>Gammaproteobacteria</taxon>
        <taxon>Enterobacterales</taxon>
        <taxon>Yersiniaceae</taxon>
        <taxon>Yersinia</taxon>
    </lineage>
</organism>
<evidence type="ECO:0000255" key="1">
    <source>
        <dbReference type="PROSITE-ProRule" id="PRU00465"/>
    </source>
</evidence>
<evidence type="ECO:0000255" key="2">
    <source>
        <dbReference type="PROSITE-ProRule" id="PRU00716"/>
    </source>
</evidence>
<evidence type="ECO:0000305" key="3"/>
<reference key="1">
    <citation type="journal article" date="1994" name="J. Bacteriol.">
        <title>CDP-6-deoxy-delta 3,4-glucoseen reductase from Yersinia pseudotuberculosis: enzyme purification and characterization of the cloned gene.</title>
        <authorList>
            <person name="Lo S.F."/>
            <person name="Miller V.P."/>
            <person name="Lei Y."/>
            <person name="Thorson J.S."/>
            <person name="Liu H.-W."/>
            <person name="Schottel J.L."/>
        </authorList>
    </citation>
    <scope>NUCLEOTIDE SEQUENCE [GENOMIC DNA]</scope>
    <scope>PARTIAL PROTEIN SEQUENCE</scope>
    <source>
        <strain>V</strain>
    </source>
</reference>
<reference key="2">
    <citation type="journal article" date="1993" name="J. Bacteriol.">
        <title>Molecular analysis of the 3,6-dideoxyhexose pathway genes of Yersinia pseudotuberculosis serogroup IIA.</title>
        <authorList>
            <person name="Kessler A.C."/>
            <person name="Haase A."/>
            <person name="Reeves P.R."/>
        </authorList>
    </citation>
    <scope>NUCLEOTIDE SEQUENCE [GENOMIC DNA]</scope>
    <source>
        <strain>M85 / Serotype IIA</strain>
    </source>
</reference>
<reference key="3">
    <citation type="journal article" date="1994" name="J. Bacteriol.">
        <title>Studies of the biosynthesis of 3,6-dideoxyhexoses: molecular cloning and characterization of the asc (ascarylose) region from Yersinia pseudotuberculosis serogroup VA.</title>
        <authorList>
            <person name="Thorson J.S."/>
            <person name="Lo S.F."/>
            <person name="Ploux O."/>
            <person name="He X."/>
            <person name="Liu H.-W."/>
        </authorList>
    </citation>
    <scope>NUCLEOTIDE SEQUENCE [GENOMIC DNA]</scope>
    <source>
        <strain>Serotype VA</strain>
    </source>
</reference>
<reference key="4">
    <citation type="submission" date="2001-12" db="EMBL/GenBank/DDBJ databases">
        <authorList>
            <person name="Pacinelli E."/>
            <person name="Wang L."/>
            <person name="Reeves P.R."/>
        </authorList>
    </citation>
    <scope>NUCLEOTIDE SEQUENCE [GENOMIC DNA]</scope>
    <source>
        <strain>Serotype IVB</strain>
    </source>
</reference>
<reference key="5">
    <citation type="journal article" date="2004" name="Proc. Natl. Acad. Sci. U.S.A.">
        <title>Insights into the evolution of Yersinia pestis through whole-genome comparison with Yersinia pseudotuberculosis.</title>
        <authorList>
            <person name="Chain P.S.G."/>
            <person name="Carniel E."/>
            <person name="Larimer F.W."/>
            <person name="Lamerdin J."/>
            <person name="Stoutland P.O."/>
            <person name="Regala W.M."/>
            <person name="Georgescu A.M."/>
            <person name="Vergez L.M."/>
            <person name="Land M.L."/>
            <person name="Motin V.L."/>
            <person name="Brubaker R.R."/>
            <person name="Fowler J."/>
            <person name="Hinnebusch J."/>
            <person name="Marceau M."/>
            <person name="Medigue C."/>
            <person name="Simonet M."/>
            <person name="Chenal-Francisque V."/>
            <person name="Souza B."/>
            <person name="Dacheux D."/>
            <person name="Elliott J.M."/>
            <person name="Derbise A."/>
            <person name="Hauser L.J."/>
            <person name="Garcia E."/>
        </authorList>
    </citation>
    <scope>NUCLEOTIDE SEQUENCE [LARGE SCALE GENOMIC DNA]</scope>
    <source>
        <strain>IP32953</strain>
    </source>
</reference>
<reference key="6">
    <citation type="journal article" date="1996" name="Biochemistry">
        <title>Kinetic characterization of an organic radical in the ascarylose biosynthetic pathway.</title>
        <authorList>
            <person name="Johnson D.A."/>
            <person name="Gassner G.T."/>
            <person name="Bandarian V."/>
            <person name="Ruzicka F.J."/>
            <person name="Ballou D.P."/>
            <person name="Reed G.H."/>
            <person name="Liu H.-W."/>
        </authorList>
    </citation>
    <scope>CHARACTERIZATION</scope>
</reference>
<reference key="7">
    <citation type="journal article" date="1996" name="Biochemistry">
        <title>Kinetics of the reductive half-reaction of the iron-sulfur flavoenzyme CDP-6-deoxy-L-threo-D-glycero-4-hexulose-3-dehydrase reductase.</title>
        <authorList>
            <person name="Gassner G.T."/>
            <person name="Johnson D.A."/>
            <person name="Liu H.-W."/>
            <person name="Ballou D.P."/>
        </authorList>
    </citation>
    <scope>CHARACTERIZATION</scope>
</reference>
<sequence>MSLNVKLHPSGIIFTSDGTSTILDAALDSNIHIEYSCKDGTCGSCKAILISGEVDSAENTFLTEEDVAKGAILTCCSKAKSDIELDVNYYPELSHIQKKTYPCKLDSIEFVGEDIAILSLRLPPTAKIQYLAGQYIDLIINGQRRSYSIANAPGGNGNIELHVRKVVNGVFSNIIFNELKLQQLLRIEGPQGTFFVREDNLPIVFLAGGTGFAPVKSMVEALINKNDQRQVHIYWGMPAGHNFYSDIANEWAIKHPNIHYVPVVSGDDSTWTGATGFVHQAVLEDIPDLSLFNVYACGSLAMITAARNDFINHGLAENKFFSDAFVPSK</sequence>
<dbReference type="EC" id="1.17.1.-"/>
<dbReference type="EMBL" id="L25594">
    <property type="protein sequence ID" value="AAA16760.1"/>
    <property type="molecule type" value="Unassigned_DNA"/>
</dbReference>
<dbReference type="EMBL" id="AF461770">
    <property type="protein sequence ID" value="AAB49398.1"/>
    <property type="molecule type" value="Genomic_DNA"/>
</dbReference>
<dbReference type="EMBL" id="L33181">
    <property type="protein sequence ID" value="AAA88698.1"/>
    <property type="molecule type" value="Genomic_DNA"/>
</dbReference>
<dbReference type="EMBL" id="AF461769">
    <property type="protein sequence ID" value="AAN23052.1"/>
    <property type="molecule type" value="Genomic_DNA"/>
</dbReference>
<dbReference type="EMBL" id="BX936398">
    <property type="protein sequence ID" value="CAH20238.1"/>
    <property type="molecule type" value="Genomic_DNA"/>
</dbReference>
<dbReference type="PIR" id="A36952">
    <property type="entry name" value="A36952"/>
</dbReference>
<dbReference type="RefSeq" id="WP_011191878.1">
    <property type="nucleotide sequence ID" value="NC_006155.1"/>
</dbReference>
<dbReference type="SMR" id="Q66DP5"/>
<dbReference type="TCDB" id="5.B.1.3.1">
    <property type="family name" value="the phagocyte (gp91(phox)) nadph oxidase family"/>
</dbReference>
<dbReference type="GeneID" id="49786946"/>
<dbReference type="KEGG" id="ypo:BZ17_1550"/>
<dbReference type="KEGG" id="yps:YPTB0998"/>
<dbReference type="PATRIC" id="fig|273123.14.peg.1643"/>
<dbReference type="BioCyc" id="MetaCyc:MONOMER-13782"/>
<dbReference type="UniPathway" id="UPA00030"/>
<dbReference type="UniPathway" id="UPA00818"/>
<dbReference type="Proteomes" id="UP000001011">
    <property type="component" value="Chromosome"/>
</dbReference>
<dbReference type="GO" id="GO:0051537">
    <property type="term" value="F:2 iron, 2 sulfur cluster binding"/>
    <property type="evidence" value="ECO:0007669"/>
    <property type="project" value="UniProtKB-KW"/>
</dbReference>
<dbReference type="GO" id="GO:0046872">
    <property type="term" value="F:metal ion binding"/>
    <property type="evidence" value="ECO:0007669"/>
    <property type="project" value="UniProtKB-KW"/>
</dbReference>
<dbReference type="GO" id="GO:0016491">
    <property type="term" value="F:oxidoreductase activity"/>
    <property type="evidence" value="ECO:0007669"/>
    <property type="project" value="UniProtKB-KW"/>
</dbReference>
<dbReference type="GO" id="GO:0009103">
    <property type="term" value="P:lipopolysaccharide biosynthetic process"/>
    <property type="evidence" value="ECO:0007669"/>
    <property type="project" value="UniProtKB-UniPathway"/>
</dbReference>
<dbReference type="CDD" id="cd00207">
    <property type="entry name" value="fer2"/>
    <property type="match status" value="1"/>
</dbReference>
<dbReference type="CDD" id="cd06189">
    <property type="entry name" value="flavin_oxioreductase"/>
    <property type="match status" value="1"/>
</dbReference>
<dbReference type="Gene3D" id="3.10.20.30">
    <property type="match status" value="1"/>
</dbReference>
<dbReference type="Gene3D" id="3.40.50.80">
    <property type="entry name" value="Nucleotide-binding domain of ferredoxin-NADP reductase (FNR) module"/>
    <property type="match status" value="1"/>
</dbReference>
<dbReference type="Gene3D" id="2.40.30.10">
    <property type="entry name" value="Translation factors"/>
    <property type="match status" value="1"/>
</dbReference>
<dbReference type="InterPro" id="IPR036010">
    <property type="entry name" value="2Fe-2S_ferredoxin-like_sf"/>
</dbReference>
<dbReference type="InterPro" id="IPR001041">
    <property type="entry name" value="2Fe-2S_ferredoxin-type"/>
</dbReference>
<dbReference type="InterPro" id="IPR006058">
    <property type="entry name" value="2Fe2S_fd_BS"/>
</dbReference>
<dbReference type="InterPro" id="IPR012675">
    <property type="entry name" value="Beta-grasp_dom_sf"/>
</dbReference>
<dbReference type="InterPro" id="IPR008333">
    <property type="entry name" value="Cbr1-like_FAD-bd_dom"/>
</dbReference>
<dbReference type="InterPro" id="IPR017927">
    <property type="entry name" value="FAD-bd_FR_type"/>
</dbReference>
<dbReference type="InterPro" id="IPR039261">
    <property type="entry name" value="FNR_nucleotide-bd"/>
</dbReference>
<dbReference type="InterPro" id="IPR050415">
    <property type="entry name" value="MRET"/>
</dbReference>
<dbReference type="InterPro" id="IPR001433">
    <property type="entry name" value="OxRdtase_FAD/NAD-bd"/>
</dbReference>
<dbReference type="InterPro" id="IPR017938">
    <property type="entry name" value="Riboflavin_synthase-like_b-brl"/>
</dbReference>
<dbReference type="PANTHER" id="PTHR47354">
    <property type="entry name" value="NADH OXIDOREDUCTASE HCR"/>
    <property type="match status" value="1"/>
</dbReference>
<dbReference type="PANTHER" id="PTHR47354:SF5">
    <property type="entry name" value="PROTEIN RFBI"/>
    <property type="match status" value="1"/>
</dbReference>
<dbReference type="Pfam" id="PF00970">
    <property type="entry name" value="FAD_binding_6"/>
    <property type="match status" value="1"/>
</dbReference>
<dbReference type="Pfam" id="PF00111">
    <property type="entry name" value="Fer2"/>
    <property type="match status" value="1"/>
</dbReference>
<dbReference type="Pfam" id="PF00175">
    <property type="entry name" value="NAD_binding_1"/>
    <property type="match status" value="1"/>
</dbReference>
<dbReference type="PRINTS" id="PR00410">
    <property type="entry name" value="PHEHYDRXLASE"/>
</dbReference>
<dbReference type="SUPFAM" id="SSF54292">
    <property type="entry name" value="2Fe-2S ferredoxin-like"/>
    <property type="match status" value="1"/>
</dbReference>
<dbReference type="SUPFAM" id="SSF52343">
    <property type="entry name" value="Ferredoxin reductase-like, C-terminal NADP-linked domain"/>
    <property type="match status" value="1"/>
</dbReference>
<dbReference type="SUPFAM" id="SSF63380">
    <property type="entry name" value="Riboflavin synthase domain-like"/>
    <property type="match status" value="1"/>
</dbReference>
<dbReference type="PROSITE" id="PS00197">
    <property type="entry name" value="2FE2S_FER_1"/>
    <property type="match status" value="1"/>
</dbReference>
<dbReference type="PROSITE" id="PS51085">
    <property type="entry name" value="2FE2S_FER_2"/>
    <property type="match status" value="1"/>
</dbReference>
<dbReference type="PROSITE" id="PS51384">
    <property type="entry name" value="FAD_FR"/>
    <property type="match status" value="1"/>
</dbReference>
<comment type="function">
    <text>Participates in the conversion of CDP-6-deoxy-D-glycero-L-threo-4-hexulose to 3,6-dideoxy-D-glycero-D-glycero-4-hexulose together with CDP-6-deoxy-D-glycero-L-threo-4-hexulose-3-dehydrase (E1) in two consecutive steps. The detailed mechanism of E3 is not yet resolved.</text>
</comment>
<comment type="pathway">
    <text>Nucleotide-sugar biosynthesis; CDP-ascarylose biosynthesis.</text>
</comment>
<comment type="pathway">
    <text>Bacterial outer membrane biogenesis; lipopolysaccharide biosynthesis.</text>
</comment>
<comment type="subunit">
    <text>Monomer.</text>
</comment>
<proteinExistence type="evidence at protein level"/>
<protein>
    <recommendedName>
        <fullName>CDP-6-deoxy-L-threo-D-glycero-4-hexulose-3-dehydrase reductase</fullName>
        <ecNumber>1.17.1.-</ecNumber>
    </recommendedName>
    <alternativeName>
        <fullName>CDP-6-deoxy-delta-3,4-glucoseen reductase</fullName>
        <shortName>E3</shortName>
    </alternativeName>
</protein>
<name>ASCD_YERPS</name>
<keyword id="KW-0001">2Fe-2S</keyword>
<keyword id="KW-0903">Direct protein sequencing</keyword>
<keyword id="KW-0249">Electron transport</keyword>
<keyword id="KW-0408">Iron</keyword>
<keyword id="KW-0411">Iron-sulfur</keyword>
<keyword id="KW-0479">Metal-binding</keyword>
<keyword id="KW-0520">NAD</keyword>
<keyword id="KW-0560">Oxidoreductase</keyword>
<keyword id="KW-0813">Transport</keyword>
<accession>Q66DP5</accession>
<accession>P37911</accession>
<accession>Q8GJ93</accession>